<reference key="1">
    <citation type="journal article" date="1997" name="Virology">
        <title>A BIR motif containing gene of African swine fever virus, 4CL, is nonessential for growth in vitro and viral virulence.</title>
        <authorList>
            <person name="Neilan J.G."/>
            <person name="Lu Z."/>
            <person name="Kutish G.F."/>
            <person name="Zsak L."/>
            <person name="Burrage T.G."/>
            <person name="Borca M.V."/>
            <person name="Carrillo C."/>
            <person name="Rock D.L."/>
        </authorList>
    </citation>
    <scope>NUCLEOTIDE SEQUENCE [GENOMIC DNA]</scope>
</reference>
<protein>
    <recommendedName>
        <fullName>IAP-like protein p27</fullName>
    </recommendedName>
</protein>
<organismHost>
    <name type="scientific">Ornithodoros</name>
    <name type="common">relapsing fever ticks</name>
    <dbReference type="NCBI Taxonomy" id="6937"/>
</organismHost>
<organismHost>
    <name type="scientific">Phacochoerus aethiopicus</name>
    <name type="common">Warthog</name>
    <dbReference type="NCBI Taxonomy" id="85517"/>
</organismHost>
<organismHost>
    <name type="scientific">Phacochoerus africanus</name>
    <name type="common">Warthog</name>
    <dbReference type="NCBI Taxonomy" id="41426"/>
</organismHost>
<organismHost>
    <name type="scientific">Potamochoerus larvatus</name>
    <name type="common">Bushpig</name>
    <dbReference type="NCBI Taxonomy" id="273792"/>
</organismHost>
<organismHost>
    <name type="scientific">Sus scrofa</name>
    <name type="common">Pig</name>
    <dbReference type="NCBI Taxonomy" id="9823"/>
</organismHost>
<comment type="function">
    <text>Not essential for growth or virulence. Does not have antiapoptotic function.</text>
</comment>
<name>IAPL_ASFC3</name>
<accession>O11451</accession>
<feature type="chain" id="PRO_0000122375" description="IAP-like protein p27">
    <location>
        <begin position="1"/>
        <end position="224"/>
    </location>
</feature>
<feature type="repeat" description="BIR">
    <location>
        <begin position="29"/>
        <end position="92"/>
    </location>
</feature>
<feature type="binding site" evidence="1">
    <location>
        <position position="62"/>
    </location>
    <ligand>
        <name>Zn(2+)</name>
        <dbReference type="ChEBI" id="CHEBI:29105"/>
    </ligand>
</feature>
<feature type="binding site" evidence="1">
    <location>
        <position position="65"/>
    </location>
    <ligand>
        <name>Zn(2+)</name>
        <dbReference type="ChEBI" id="CHEBI:29105"/>
    </ligand>
</feature>
<feature type="binding site" evidence="1">
    <location>
        <position position="82"/>
    </location>
    <ligand>
        <name>Zn(2+)</name>
        <dbReference type="ChEBI" id="CHEBI:29105"/>
    </ligand>
</feature>
<feature type="binding site" evidence="1">
    <location>
        <position position="89"/>
    </location>
    <ligand>
        <name>Zn(2+)</name>
        <dbReference type="ChEBI" id="CHEBI:29105"/>
    </ligand>
</feature>
<gene>
    <name type="primary">p27</name>
    <name type="ORF">4CL</name>
</gene>
<sequence>MFPKINTIDPYISLRLFEVKPKYVGYSSVDARNQSFAIHDIKDYEKFSNAGLFYTSPTEITCYCCGMKFCNWLYEKHPLQVHGFWSRNCGFMRATLGIIGLKKMIDSYNDYYNNEVFVKHKNRVYTHKKLEDMGFSKPFMQFILANAFIPPYRKYIHKIILNDRYFTFKFAAHLLSFHKVNLDNQTTYCMTCGIEPIKKDENFCNACKTLNYKHYKTLNFSVKL</sequence>
<keyword id="KW-0479">Metal-binding</keyword>
<keyword id="KW-0862">Zinc</keyword>
<evidence type="ECO:0000255" key="1">
    <source>
        <dbReference type="PROSITE-ProRule" id="PRU00029"/>
    </source>
</evidence>
<dbReference type="EMBL" id="U91732">
    <property type="protein sequence ID" value="AAB58387.1"/>
    <property type="molecule type" value="Genomic_DNA"/>
</dbReference>
<dbReference type="SMR" id="O11451"/>
<dbReference type="GO" id="GO:0046872">
    <property type="term" value="F:metal ion binding"/>
    <property type="evidence" value="ECO:0007669"/>
    <property type="project" value="UniProtKB-KW"/>
</dbReference>
<dbReference type="CDD" id="cd00022">
    <property type="entry name" value="BIR"/>
    <property type="match status" value="1"/>
</dbReference>
<dbReference type="FunFam" id="1.10.1170.10:FF:000014">
    <property type="entry name" value="IAP-like protein p27"/>
    <property type="match status" value="1"/>
</dbReference>
<dbReference type="Gene3D" id="1.10.1170.10">
    <property type="entry name" value="Inhibitor Of Apoptosis Protein (2mihbC-IAP-1), Chain A"/>
    <property type="match status" value="1"/>
</dbReference>
<dbReference type="InterPro" id="IPR010549">
    <property type="entry name" value="ASFV_p27_C"/>
</dbReference>
<dbReference type="InterPro" id="IPR001370">
    <property type="entry name" value="BIR_rpt"/>
</dbReference>
<dbReference type="Pfam" id="PF06556">
    <property type="entry name" value="ASFV_p27"/>
    <property type="match status" value="1"/>
</dbReference>
<dbReference type="Pfam" id="PF00653">
    <property type="entry name" value="BIR"/>
    <property type="match status" value="1"/>
</dbReference>
<dbReference type="SMART" id="SM00238">
    <property type="entry name" value="BIR"/>
    <property type="match status" value="1"/>
</dbReference>
<dbReference type="SUPFAM" id="SSF57924">
    <property type="entry name" value="Inhibitor of apoptosis (IAP) repeat"/>
    <property type="match status" value="1"/>
</dbReference>
<dbReference type="PROSITE" id="PS01282">
    <property type="entry name" value="BIR_REPEAT_1"/>
    <property type="match status" value="1"/>
</dbReference>
<dbReference type="PROSITE" id="PS50143">
    <property type="entry name" value="BIR_REPEAT_2"/>
    <property type="match status" value="1"/>
</dbReference>
<organism>
    <name type="scientific">African swine fever virus (isolate Tick/South Africa/Crocodile Cr3/1996)</name>
    <name type="common">ASFV</name>
    <dbReference type="NCBI Taxonomy" id="82811"/>
    <lineage>
        <taxon>Viruses</taxon>
        <taxon>Varidnaviria</taxon>
        <taxon>Bamfordvirae</taxon>
        <taxon>Nucleocytoviricota</taxon>
        <taxon>Pokkesviricetes</taxon>
        <taxon>Asfuvirales</taxon>
        <taxon>Asfarviridae</taxon>
        <taxon>Asfivirus</taxon>
        <taxon>African swine fever virus</taxon>
    </lineage>
</organism>
<proteinExistence type="predicted"/>